<gene>
    <name evidence="1" type="primary">trpA</name>
    <name type="ordered locus">Tbd_1913</name>
</gene>
<accession>Q3SHM0</accession>
<reference key="1">
    <citation type="journal article" date="2006" name="J. Bacteriol.">
        <title>The genome sequence of the obligately chemolithoautotrophic, facultatively anaerobic bacterium Thiobacillus denitrificans.</title>
        <authorList>
            <person name="Beller H.R."/>
            <person name="Chain P.S."/>
            <person name="Letain T.E."/>
            <person name="Chakicherla A."/>
            <person name="Larimer F.W."/>
            <person name="Richardson P.M."/>
            <person name="Coleman M.A."/>
            <person name="Wood A.P."/>
            <person name="Kelly D.P."/>
        </authorList>
    </citation>
    <scope>NUCLEOTIDE SEQUENCE [LARGE SCALE GENOMIC DNA]</scope>
    <source>
        <strain>ATCC 25259 / T1</strain>
    </source>
</reference>
<sequence>MSRIGQTFTALKAQNRKALISFITAGDPGKGLTVPLMHALVDAGTDIIELGVPFSDPMADGPVIQRASERALANKVGLKDVLAMTAEFRKVNTSTPVVLMGYANPFEHMGYETFAEAAKTAGVDGVLTVDIPPEESLGVSDVFKAHDLDPIFLLSPTTPESRVAQVAAVAGGFIYYVSLKGVTGSANLDTEEVARKVAMVRKHCDLPVGVGFGIRDAATAEAVARIADAVVVGSRIVNEIETAPEGECGARVKHLVADLRRGVDAASKQTENK</sequence>
<keyword id="KW-0028">Amino-acid biosynthesis</keyword>
<keyword id="KW-0057">Aromatic amino acid biosynthesis</keyword>
<keyword id="KW-0456">Lyase</keyword>
<keyword id="KW-1185">Reference proteome</keyword>
<keyword id="KW-0822">Tryptophan biosynthesis</keyword>
<organism>
    <name type="scientific">Thiobacillus denitrificans (strain ATCC 25259 / T1)</name>
    <dbReference type="NCBI Taxonomy" id="292415"/>
    <lineage>
        <taxon>Bacteria</taxon>
        <taxon>Pseudomonadati</taxon>
        <taxon>Pseudomonadota</taxon>
        <taxon>Betaproteobacteria</taxon>
        <taxon>Nitrosomonadales</taxon>
        <taxon>Thiobacillaceae</taxon>
        <taxon>Thiobacillus</taxon>
    </lineage>
</organism>
<name>TRPA_THIDA</name>
<dbReference type="EC" id="4.2.1.20" evidence="1"/>
<dbReference type="EMBL" id="CP000116">
    <property type="protein sequence ID" value="AAZ97866.1"/>
    <property type="molecule type" value="Genomic_DNA"/>
</dbReference>
<dbReference type="RefSeq" id="WP_011312425.1">
    <property type="nucleotide sequence ID" value="NC_007404.1"/>
</dbReference>
<dbReference type="SMR" id="Q3SHM0"/>
<dbReference type="STRING" id="292415.Tbd_1913"/>
<dbReference type="KEGG" id="tbd:Tbd_1913"/>
<dbReference type="eggNOG" id="COG0159">
    <property type="taxonomic scope" value="Bacteria"/>
</dbReference>
<dbReference type="HOGENOM" id="CLU_016734_0_0_4"/>
<dbReference type="OrthoDB" id="9804578at2"/>
<dbReference type="UniPathway" id="UPA00035">
    <property type="reaction ID" value="UER00044"/>
</dbReference>
<dbReference type="Proteomes" id="UP000008291">
    <property type="component" value="Chromosome"/>
</dbReference>
<dbReference type="GO" id="GO:0005829">
    <property type="term" value="C:cytosol"/>
    <property type="evidence" value="ECO:0007669"/>
    <property type="project" value="TreeGrafter"/>
</dbReference>
<dbReference type="GO" id="GO:0004834">
    <property type="term" value="F:tryptophan synthase activity"/>
    <property type="evidence" value="ECO:0007669"/>
    <property type="project" value="UniProtKB-UniRule"/>
</dbReference>
<dbReference type="CDD" id="cd04724">
    <property type="entry name" value="Tryptophan_synthase_alpha"/>
    <property type="match status" value="1"/>
</dbReference>
<dbReference type="FunFam" id="3.20.20.70:FF:000037">
    <property type="entry name" value="Tryptophan synthase alpha chain"/>
    <property type="match status" value="1"/>
</dbReference>
<dbReference type="Gene3D" id="3.20.20.70">
    <property type="entry name" value="Aldolase class I"/>
    <property type="match status" value="1"/>
</dbReference>
<dbReference type="HAMAP" id="MF_00131">
    <property type="entry name" value="Trp_synth_alpha"/>
    <property type="match status" value="1"/>
</dbReference>
<dbReference type="InterPro" id="IPR013785">
    <property type="entry name" value="Aldolase_TIM"/>
</dbReference>
<dbReference type="InterPro" id="IPR011060">
    <property type="entry name" value="RibuloseP-bd_barrel"/>
</dbReference>
<dbReference type="InterPro" id="IPR018204">
    <property type="entry name" value="Trp_synthase_alpha_AS"/>
</dbReference>
<dbReference type="InterPro" id="IPR002028">
    <property type="entry name" value="Trp_synthase_suA"/>
</dbReference>
<dbReference type="NCBIfam" id="TIGR00262">
    <property type="entry name" value="trpA"/>
    <property type="match status" value="1"/>
</dbReference>
<dbReference type="PANTHER" id="PTHR43406:SF1">
    <property type="entry name" value="TRYPTOPHAN SYNTHASE ALPHA CHAIN, CHLOROPLASTIC"/>
    <property type="match status" value="1"/>
</dbReference>
<dbReference type="PANTHER" id="PTHR43406">
    <property type="entry name" value="TRYPTOPHAN SYNTHASE, ALPHA CHAIN"/>
    <property type="match status" value="1"/>
</dbReference>
<dbReference type="Pfam" id="PF00290">
    <property type="entry name" value="Trp_syntA"/>
    <property type="match status" value="1"/>
</dbReference>
<dbReference type="SUPFAM" id="SSF51366">
    <property type="entry name" value="Ribulose-phoshate binding barrel"/>
    <property type="match status" value="1"/>
</dbReference>
<dbReference type="PROSITE" id="PS00167">
    <property type="entry name" value="TRP_SYNTHASE_ALPHA"/>
    <property type="match status" value="1"/>
</dbReference>
<proteinExistence type="inferred from homology"/>
<evidence type="ECO:0000255" key="1">
    <source>
        <dbReference type="HAMAP-Rule" id="MF_00131"/>
    </source>
</evidence>
<feature type="chain" id="PRO_1000018303" description="Tryptophan synthase alpha chain">
    <location>
        <begin position="1"/>
        <end position="273"/>
    </location>
</feature>
<feature type="active site" description="Proton acceptor" evidence="1">
    <location>
        <position position="49"/>
    </location>
</feature>
<feature type="active site" description="Proton acceptor" evidence="1">
    <location>
        <position position="60"/>
    </location>
</feature>
<protein>
    <recommendedName>
        <fullName evidence="1">Tryptophan synthase alpha chain</fullName>
        <ecNumber evidence="1">4.2.1.20</ecNumber>
    </recommendedName>
</protein>
<comment type="function">
    <text evidence="1">The alpha subunit is responsible for the aldol cleavage of indoleglycerol phosphate to indole and glyceraldehyde 3-phosphate.</text>
</comment>
<comment type="catalytic activity">
    <reaction evidence="1">
        <text>(1S,2R)-1-C-(indol-3-yl)glycerol 3-phosphate + L-serine = D-glyceraldehyde 3-phosphate + L-tryptophan + H2O</text>
        <dbReference type="Rhea" id="RHEA:10532"/>
        <dbReference type="ChEBI" id="CHEBI:15377"/>
        <dbReference type="ChEBI" id="CHEBI:33384"/>
        <dbReference type="ChEBI" id="CHEBI:57912"/>
        <dbReference type="ChEBI" id="CHEBI:58866"/>
        <dbReference type="ChEBI" id="CHEBI:59776"/>
        <dbReference type="EC" id="4.2.1.20"/>
    </reaction>
</comment>
<comment type="pathway">
    <text evidence="1">Amino-acid biosynthesis; L-tryptophan biosynthesis; L-tryptophan from chorismate: step 5/5.</text>
</comment>
<comment type="subunit">
    <text evidence="1">Tetramer of two alpha and two beta chains.</text>
</comment>
<comment type="similarity">
    <text evidence="1">Belongs to the TrpA family.</text>
</comment>